<accession>P86022</accession>
<dbReference type="GO" id="GO:0005576">
    <property type="term" value="C:extracellular region"/>
    <property type="evidence" value="ECO:0000314"/>
    <property type="project" value="UniProtKB"/>
</dbReference>
<dbReference type="GO" id="GO:0042742">
    <property type="term" value="P:defense response to bacterium"/>
    <property type="evidence" value="ECO:0007669"/>
    <property type="project" value="UniProtKB-KW"/>
</dbReference>
<dbReference type="InterPro" id="IPR012521">
    <property type="entry name" value="Antimicrobial_frog_2"/>
</dbReference>
<dbReference type="Pfam" id="PF08023">
    <property type="entry name" value="Antimicrobial_2"/>
    <property type="match status" value="1"/>
</dbReference>
<name>BR2A_PELRI</name>
<proteinExistence type="evidence at protein level"/>
<comment type="function">
    <text evidence="1">Antimicrobial peptide.</text>
</comment>
<comment type="subcellular location">
    <subcellularLocation>
        <location evidence="5">Secreted</location>
    </subcellularLocation>
</comment>
<comment type="tissue specificity">
    <text evidence="5">Expressed by the skin glands.</text>
</comment>
<comment type="mass spectrometry" mass="2990.0" method="Electrospray" evidence="3"/>
<comment type="similarity">
    <text evidence="2">Belongs to the frog skin active peptide (FSAP) family. Brevinin subfamily.</text>
</comment>
<sequence length="29" mass="2994">GILDSLKNFAKDAAGILLKKASCKLSGQC</sequence>
<evidence type="ECO:0000250" key="1">
    <source>
        <dbReference type="UniProtKB" id="P40840"/>
    </source>
</evidence>
<evidence type="ECO:0000255" key="2"/>
<evidence type="ECO:0000269" key="3">
    <source>
    </source>
</evidence>
<evidence type="ECO:0000303" key="4">
    <source>
    </source>
</evidence>
<evidence type="ECO:0000305" key="5"/>
<protein>
    <recommendedName>
        <fullName evidence="4">Brevinin-2Ra</fullName>
    </recommendedName>
</protein>
<organism>
    <name type="scientific">Pelophylax ridibundus</name>
    <name type="common">Marsh frog</name>
    <name type="synonym">Rana ridibunda</name>
    <dbReference type="NCBI Taxonomy" id="8406"/>
    <lineage>
        <taxon>Eukaryota</taxon>
        <taxon>Metazoa</taxon>
        <taxon>Chordata</taxon>
        <taxon>Craniata</taxon>
        <taxon>Vertebrata</taxon>
        <taxon>Euteleostomi</taxon>
        <taxon>Amphibia</taxon>
        <taxon>Batrachia</taxon>
        <taxon>Anura</taxon>
        <taxon>Neobatrachia</taxon>
        <taxon>Ranoidea</taxon>
        <taxon>Ranidae</taxon>
        <taxon>Pelophylax</taxon>
    </lineage>
</organism>
<reference evidence="5" key="1">
    <citation type="journal article" date="2008" name="Rapid Commun. Mass Spectrom.">
        <title>De novo sequencing of peptides secreted by the skin glands of the caucasian green frog Rana ridibunda.</title>
        <authorList>
            <person name="Samgina T.Y."/>
            <person name="Artemenko K.A."/>
            <person name="Gorshkov V.A."/>
            <person name="Ogourtsov S.V."/>
            <person name="Zubarev R.A."/>
            <person name="Lebedev A.T."/>
        </authorList>
    </citation>
    <scope>PROTEIN SEQUENCE</scope>
    <scope>MASS SPECTROMETRY</scope>
    <scope>DISULFIDE BOND</scope>
    <source>
        <tissue evidence="3">Skin secretion</tissue>
    </source>
</reference>
<keyword id="KW-0878">Amphibian defense peptide</keyword>
<keyword id="KW-0044">Antibiotic</keyword>
<keyword id="KW-0929">Antimicrobial</keyword>
<keyword id="KW-0903">Direct protein sequencing</keyword>
<keyword id="KW-1015">Disulfide bond</keyword>
<keyword id="KW-0964">Secreted</keyword>
<feature type="peptide" id="PRO_0000361063" description="Brevinin-2Ra" evidence="3">
    <location>
        <begin position="1"/>
        <end position="29"/>
    </location>
</feature>
<feature type="disulfide bond" evidence="3">
    <location>
        <begin position="23"/>
        <end position="29"/>
    </location>
</feature>